<gene>
    <name type="primary">GF14D</name>
    <name type="ordered locus">Os11g0546900</name>
    <name type="ordered locus">LOC_Os11g34450</name>
    <name evidence="6" type="ORF">OsJ_34200</name>
</gene>
<comment type="function">
    <text evidence="1">Is associated with a DNA binding complex that binds to the G box, a well-characterized cis-acting DNA regulatory element found in plant genes.</text>
</comment>
<comment type="subunit">
    <text evidence="3 4">Interacts with BZR1 (PubMed:17699623). Interacts with ABI5 (PubMed:21055780).</text>
</comment>
<comment type="similarity">
    <text evidence="5">Belongs to the 14-3-3 family.</text>
</comment>
<organism>
    <name type="scientific">Oryza sativa subsp. japonica</name>
    <name type="common">Rice</name>
    <dbReference type="NCBI Taxonomy" id="39947"/>
    <lineage>
        <taxon>Eukaryota</taxon>
        <taxon>Viridiplantae</taxon>
        <taxon>Streptophyta</taxon>
        <taxon>Embryophyta</taxon>
        <taxon>Tracheophyta</taxon>
        <taxon>Spermatophyta</taxon>
        <taxon>Magnoliopsida</taxon>
        <taxon>Liliopsida</taxon>
        <taxon>Poales</taxon>
        <taxon>Poaceae</taxon>
        <taxon>BOP clade</taxon>
        <taxon>Oryzoideae</taxon>
        <taxon>Oryzeae</taxon>
        <taxon>Oryzinae</taxon>
        <taxon>Oryza</taxon>
        <taxon>Oryza sativa</taxon>
    </lineage>
</organism>
<keyword id="KW-1185">Reference proteome</keyword>
<accession>Q2R2W2</accession>
<accession>A3CC66</accession>
<accession>O24223</accession>
<accession>Q0IS85</accession>
<dbReference type="EMBL" id="U65958">
    <property type="protein sequence ID" value="AAB07458.1"/>
    <property type="molecule type" value="mRNA"/>
</dbReference>
<dbReference type="EMBL" id="DP000010">
    <property type="protein sequence ID" value="ABA94230.1"/>
    <property type="molecule type" value="Genomic_DNA"/>
</dbReference>
<dbReference type="EMBL" id="AP008217">
    <property type="protein sequence ID" value="BAF28430.2"/>
    <property type="molecule type" value="Genomic_DNA"/>
</dbReference>
<dbReference type="EMBL" id="AP014967">
    <property type="protein sequence ID" value="BAT14388.1"/>
    <property type="molecule type" value="Genomic_DNA"/>
</dbReference>
<dbReference type="EMBL" id="CM000148">
    <property type="protein sequence ID" value="EAZ18679.1"/>
    <property type="molecule type" value="Genomic_DNA"/>
</dbReference>
<dbReference type="EMBL" id="AK070548">
    <property type="protein sequence ID" value="BAG92023.1"/>
    <property type="molecule type" value="mRNA"/>
</dbReference>
<dbReference type="EMBL" id="AK101580">
    <property type="protein sequence ID" value="BAG95132.1"/>
    <property type="molecule type" value="mRNA"/>
</dbReference>
<dbReference type="PIR" id="T04154">
    <property type="entry name" value="T04154"/>
</dbReference>
<dbReference type="RefSeq" id="XP_015617058.1">
    <property type="nucleotide sequence ID" value="XM_015761572.1"/>
</dbReference>
<dbReference type="SMR" id="Q2R2W2"/>
<dbReference type="DIP" id="DIP-46488N"/>
<dbReference type="FunCoup" id="Q2R2W2">
    <property type="interactions" value="644"/>
</dbReference>
<dbReference type="IntAct" id="Q2R2W2">
    <property type="interactions" value="1"/>
</dbReference>
<dbReference type="STRING" id="39947.Q2R2W2"/>
<dbReference type="PaxDb" id="39947-Q2R2W2"/>
<dbReference type="EnsemblPlants" id="Os11t0546900-01">
    <property type="protein sequence ID" value="Os11t0546900-01"/>
    <property type="gene ID" value="Os11g0546900"/>
</dbReference>
<dbReference type="Gramene" id="Os11t0546900-01">
    <property type="protein sequence ID" value="Os11t0546900-01"/>
    <property type="gene ID" value="Os11g0546900"/>
</dbReference>
<dbReference type="KEGG" id="dosa:Os11g0546900"/>
<dbReference type="eggNOG" id="KOG0841">
    <property type="taxonomic scope" value="Eukaryota"/>
</dbReference>
<dbReference type="HOGENOM" id="CLU_058290_0_0_1"/>
<dbReference type="InParanoid" id="Q2R2W2"/>
<dbReference type="OMA" id="KGCQLAR"/>
<dbReference type="OrthoDB" id="10260625at2759"/>
<dbReference type="PlantReactome" id="R-OSA-5632095">
    <property type="pathway name" value="Brassinosteroid signaling"/>
</dbReference>
<dbReference type="Proteomes" id="UP000000763">
    <property type="component" value="Chromosome 11"/>
</dbReference>
<dbReference type="Proteomes" id="UP000007752">
    <property type="component" value="Chromosome 11"/>
</dbReference>
<dbReference type="Proteomes" id="UP000059680">
    <property type="component" value="Chromosome 11"/>
</dbReference>
<dbReference type="GO" id="GO:0005737">
    <property type="term" value="C:cytoplasm"/>
    <property type="evidence" value="ECO:0000318"/>
    <property type="project" value="GO_Central"/>
</dbReference>
<dbReference type="GO" id="GO:0008104">
    <property type="term" value="P:protein localization"/>
    <property type="evidence" value="ECO:0000318"/>
    <property type="project" value="GO_Central"/>
</dbReference>
<dbReference type="GO" id="GO:0007165">
    <property type="term" value="P:signal transduction"/>
    <property type="evidence" value="ECO:0000318"/>
    <property type="project" value="GO_Central"/>
</dbReference>
<dbReference type="FunFam" id="1.20.190.20:FF:000002">
    <property type="entry name" value="14-3-3 protein epsilon"/>
    <property type="match status" value="1"/>
</dbReference>
<dbReference type="Gene3D" id="1.20.190.20">
    <property type="entry name" value="14-3-3 domain"/>
    <property type="match status" value="1"/>
</dbReference>
<dbReference type="InterPro" id="IPR000308">
    <property type="entry name" value="14-3-3"/>
</dbReference>
<dbReference type="InterPro" id="IPR023409">
    <property type="entry name" value="14-3-3_CS"/>
</dbReference>
<dbReference type="InterPro" id="IPR036815">
    <property type="entry name" value="14-3-3_dom_sf"/>
</dbReference>
<dbReference type="InterPro" id="IPR023410">
    <property type="entry name" value="14-3-3_domain"/>
</dbReference>
<dbReference type="PANTHER" id="PTHR18860">
    <property type="entry name" value="14-3-3 PROTEIN"/>
    <property type="match status" value="1"/>
</dbReference>
<dbReference type="Pfam" id="PF00244">
    <property type="entry name" value="14-3-3"/>
    <property type="match status" value="1"/>
</dbReference>
<dbReference type="PIRSF" id="PIRSF000868">
    <property type="entry name" value="14-3-3"/>
    <property type="match status" value="1"/>
</dbReference>
<dbReference type="PRINTS" id="PR00305">
    <property type="entry name" value="1433ZETA"/>
</dbReference>
<dbReference type="SMART" id="SM00101">
    <property type="entry name" value="14_3_3"/>
    <property type="match status" value="1"/>
</dbReference>
<dbReference type="SUPFAM" id="SSF48445">
    <property type="entry name" value="14-3-3 protein"/>
    <property type="match status" value="1"/>
</dbReference>
<dbReference type="PROSITE" id="PS00796">
    <property type="entry name" value="1433_1"/>
    <property type="match status" value="1"/>
</dbReference>
<dbReference type="PROSITE" id="PS00797">
    <property type="entry name" value="1433_2"/>
    <property type="match status" value="1"/>
</dbReference>
<protein>
    <recommendedName>
        <fullName>14-3-3-like protein GF14-D</fullName>
    </recommendedName>
    <alternativeName>
        <fullName>G-box factor 14-3-3 homolog D</fullName>
    </alternativeName>
</protein>
<evidence type="ECO:0000250" key="1"/>
<evidence type="ECO:0000256" key="2">
    <source>
        <dbReference type="SAM" id="MobiDB-lite"/>
    </source>
</evidence>
<evidence type="ECO:0000269" key="3">
    <source>
    </source>
</evidence>
<evidence type="ECO:0000269" key="4">
    <source>
    </source>
</evidence>
<evidence type="ECO:0000305" key="5"/>
<evidence type="ECO:0000312" key="6">
    <source>
        <dbReference type="EMBL" id="EAZ18679.1"/>
    </source>
</evidence>
<feature type="chain" id="PRO_0000246066" description="14-3-3-like protein GF14-D">
    <location>
        <begin position="1"/>
        <end position="265"/>
    </location>
</feature>
<feature type="region of interest" description="Disordered" evidence="2">
    <location>
        <begin position="244"/>
        <end position="265"/>
    </location>
</feature>
<feature type="compositionally biased region" description="Basic and acidic residues" evidence="2">
    <location>
        <begin position="251"/>
        <end position="265"/>
    </location>
</feature>
<name>14334_ORYSJ</name>
<sequence length="265" mass="29262">MSPAEPTREESVYKAKLAEQAERYEEMVEYMERVARAAGGASGGEELTVEERNLLSVAYKNVIGARRASWRIISSIEQKEEGRGNDAHAATIRSYRGKIEAELARICDGILALLDSHLVPSAGAAESKVFYLKMKGDYHRYLAEFKSGDERKQAAESTMNAYKAAQDIALADLAPTHPIRLGLALNFSVFYYEILNSPDRACNLAKQAFDEAISELDSLGEESYKDSTLIMQLLRDNLTLWTSDANDDGGDEIKEAAAPKEPGDQ</sequence>
<proteinExistence type="evidence at protein level"/>
<reference key="1">
    <citation type="journal article" date="1998" name="Plant Cell">
        <title>14-3-3 proteins are part of an abscisic acid-VIVIPAROUS1 (VP1) response complex in the Em promoter and interact with VP1 and EmBP1.</title>
        <authorList>
            <person name="Schultz T.F."/>
            <person name="Medina J."/>
            <person name="Hill A."/>
            <person name="Quatrano R.S."/>
        </authorList>
    </citation>
    <scope>NUCLEOTIDE SEQUENCE [MRNA]</scope>
    <source>
        <strain>cv. Nipponbare</strain>
        <tissue>Embryo</tissue>
    </source>
</reference>
<reference key="2">
    <citation type="journal article" date="2005" name="BMC Biol.">
        <title>The sequence of rice chromosomes 11 and 12, rich in disease resistance genes and recent gene duplications.</title>
        <authorList>
            <consortium name="The rice chromosomes 11 and 12 sequencing consortia"/>
        </authorList>
    </citation>
    <scope>NUCLEOTIDE SEQUENCE [LARGE SCALE GENOMIC DNA]</scope>
    <source>
        <strain>cv. Nipponbare</strain>
    </source>
</reference>
<reference key="3">
    <citation type="journal article" date="2005" name="Nature">
        <title>The map-based sequence of the rice genome.</title>
        <authorList>
            <consortium name="International rice genome sequencing project (IRGSP)"/>
        </authorList>
    </citation>
    <scope>NUCLEOTIDE SEQUENCE [LARGE SCALE GENOMIC DNA]</scope>
    <source>
        <strain>cv. Nipponbare</strain>
    </source>
</reference>
<reference key="4">
    <citation type="journal article" date="2008" name="Nucleic Acids Res.">
        <title>The rice annotation project database (RAP-DB): 2008 update.</title>
        <authorList>
            <consortium name="The rice annotation project (RAP)"/>
        </authorList>
    </citation>
    <scope>GENOME REANNOTATION</scope>
    <source>
        <strain>cv. Nipponbare</strain>
    </source>
</reference>
<reference key="5">
    <citation type="journal article" date="2013" name="Rice">
        <title>Improvement of the Oryza sativa Nipponbare reference genome using next generation sequence and optical map data.</title>
        <authorList>
            <person name="Kawahara Y."/>
            <person name="de la Bastide M."/>
            <person name="Hamilton J.P."/>
            <person name="Kanamori H."/>
            <person name="McCombie W.R."/>
            <person name="Ouyang S."/>
            <person name="Schwartz D.C."/>
            <person name="Tanaka T."/>
            <person name="Wu J."/>
            <person name="Zhou S."/>
            <person name="Childs K.L."/>
            <person name="Davidson R.M."/>
            <person name="Lin H."/>
            <person name="Quesada-Ocampo L."/>
            <person name="Vaillancourt B."/>
            <person name="Sakai H."/>
            <person name="Lee S.S."/>
            <person name="Kim J."/>
            <person name="Numa H."/>
            <person name="Itoh T."/>
            <person name="Buell C.R."/>
            <person name="Matsumoto T."/>
        </authorList>
    </citation>
    <scope>GENOME REANNOTATION</scope>
    <source>
        <strain>cv. Nipponbare</strain>
    </source>
</reference>
<reference key="6">
    <citation type="journal article" date="2005" name="PLoS Biol.">
        <title>The genomes of Oryza sativa: a history of duplications.</title>
        <authorList>
            <person name="Yu J."/>
            <person name="Wang J."/>
            <person name="Lin W."/>
            <person name="Li S."/>
            <person name="Li H."/>
            <person name="Zhou J."/>
            <person name="Ni P."/>
            <person name="Dong W."/>
            <person name="Hu S."/>
            <person name="Zeng C."/>
            <person name="Zhang J."/>
            <person name="Zhang Y."/>
            <person name="Li R."/>
            <person name="Xu Z."/>
            <person name="Li S."/>
            <person name="Li X."/>
            <person name="Zheng H."/>
            <person name="Cong L."/>
            <person name="Lin L."/>
            <person name="Yin J."/>
            <person name="Geng J."/>
            <person name="Li G."/>
            <person name="Shi J."/>
            <person name="Liu J."/>
            <person name="Lv H."/>
            <person name="Li J."/>
            <person name="Wang J."/>
            <person name="Deng Y."/>
            <person name="Ran L."/>
            <person name="Shi X."/>
            <person name="Wang X."/>
            <person name="Wu Q."/>
            <person name="Li C."/>
            <person name="Ren X."/>
            <person name="Wang J."/>
            <person name="Wang X."/>
            <person name="Li D."/>
            <person name="Liu D."/>
            <person name="Zhang X."/>
            <person name="Ji Z."/>
            <person name="Zhao W."/>
            <person name="Sun Y."/>
            <person name="Zhang Z."/>
            <person name="Bao J."/>
            <person name="Han Y."/>
            <person name="Dong L."/>
            <person name="Ji J."/>
            <person name="Chen P."/>
            <person name="Wu S."/>
            <person name="Liu J."/>
            <person name="Xiao Y."/>
            <person name="Bu D."/>
            <person name="Tan J."/>
            <person name="Yang L."/>
            <person name="Ye C."/>
            <person name="Zhang J."/>
            <person name="Xu J."/>
            <person name="Zhou Y."/>
            <person name="Yu Y."/>
            <person name="Zhang B."/>
            <person name="Zhuang S."/>
            <person name="Wei H."/>
            <person name="Liu B."/>
            <person name="Lei M."/>
            <person name="Yu H."/>
            <person name="Li Y."/>
            <person name="Xu H."/>
            <person name="Wei S."/>
            <person name="He X."/>
            <person name="Fang L."/>
            <person name="Zhang Z."/>
            <person name="Zhang Y."/>
            <person name="Huang X."/>
            <person name="Su Z."/>
            <person name="Tong W."/>
            <person name="Li J."/>
            <person name="Tong Z."/>
            <person name="Li S."/>
            <person name="Ye J."/>
            <person name="Wang L."/>
            <person name="Fang L."/>
            <person name="Lei T."/>
            <person name="Chen C.-S."/>
            <person name="Chen H.-C."/>
            <person name="Xu Z."/>
            <person name="Li H."/>
            <person name="Huang H."/>
            <person name="Zhang F."/>
            <person name="Xu H."/>
            <person name="Li N."/>
            <person name="Zhao C."/>
            <person name="Li S."/>
            <person name="Dong L."/>
            <person name="Huang Y."/>
            <person name="Li L."/>
            <person name="Xi Y."/>
            <person name="Qi Q."/>
            <person name="Li W."/>
            <person name="Zhang B."/>
            <person name="Hu W."/>
            <person name="Zhang Y."/>
            <person name="Tian X."/>
            <person name="Jiao Y."/>
            <person name="Liang X."/>
            <person name="Jin J."/>
            <person name="Gao L."/>
            <person name="Zheng W."/>
            <person name="Hao B."/>
            <person name="Liu S.-M."/>
            <person name="Wang W."/>
            <person name="Yuan L."/>
            <person name="Cao M."/>
            <person name="McDermott J."/>
            <person name="Samudrala R."/>
            <person name="Wang J."/>
            <person name="Wong G.K.-S."/>
            <person name="Yang H."/>
        </authorList>
    </citation>
    <scope>NUCLEOTIDE SEQUENCE [LARGE SCALE GENOMIC DNA]</scope>
    <source>
        <strain>cv. Nipponbare</strain>
    </source>
</reference>
<reference key="7">
    <citation type="journal article" date="2003" name="Science">
        <title>Collection, mapping, and annotation of over 28,000 cDNA clones from japonica rice.</title>
        <authorList>
            <consortium name="The rice full-length cDNA consortium"/>
        </authorList>
    </citation>
    <scope>NUCLEOTIDE SEQUENCE [LARGE SCALE MRNA]</scope>
    <source>
        <strain>cv. Nipponbare</strain>
    </source>
</reference>
<reference key="8">
    <citation type="journal article" date="2006" name="DNA Res.">
        <title>The rice 14-3-3 gene family and its involvement in responses to biotic and abiotic stress.</title>
        <authorList>
            <person name="Chen F."/>
            <person name="Li Q."/>
            <person name="Sun L."/>
            <person name="He Z."/>
        </authorList>
    </citation>
    <scope>NOMENCLATURE</scope>
</reference>
<reference key="9">
    <citation type="journal article" date="2007" name="Proc. Natl. Acad. Sci. U.S.A.">
        <title>Functions of OsBZR1 and 14-3-3 proteins in brassinosteroid signaling in rice.</title>
        <authorList>
            <person name="Bai M.Y."/>
            <person name="Zhang L.Y."/>
            <person name="Gampala S.S."/>
            <person name="Zhu S.W."/>
            <person name="Song W.Y."/>
            <person name="Chong K."/>
            <person name="Wang Z.Y."/>
        </authorList>
    </citation>
    <scope>INTERACTION WITH BZR1</scope>
</reference>
<reference key="10">
    <citation type="journal article" date="2011" name="Phytochemistry">
        <title>Phosphorylation-mediated regulation of a rice ABA responsive element binding factor.</title>
        <authorList>
            <person name="Hong J.Y."/>
            <person name="Chae M.J."/>
            <person name="Lee I.S."/>
            <person name="Lee Y.N."/>
            <person name="Nam M.H."/>
            <person name="Kim D.Y."/>
            <person name="Byun M.O."/>
            <person name="Yoon I.S."/>
        </authorList>
    </citation>
    <scope>INTERACTION WITH ABI5</scope>
</reference>